<gene>
    <name evidence="1" type="primary">ndhJ</name>
</gene>
<reference key="1">
    <citation type="journal article" date="2008" name="BMC Plant Biol.">
        <title>Complete nucleotide sequence of the Cryptomeria japonica D. Don. chloroplast genome and comparative chloroplast genomics: diversified genomic structure of coniferous species.</title>
        <authorList>
            <person name="Hirao T."/>
            <person name="Watanabe A."/>
            <person name="Kurita M."/>
            <person name="Kondo T."/>
            <person name="Takata K."/>
        </authorList>
    </citation>
    <scope>NUCLEOTIDE SEQUENCE [LARGE SCALE GENOMIC DNA]</scope>
</reference>
<evidence type="ECO:0000255" key="1">
    <source>
        <dbReference type="HAMAP-Rule" id="MF_01357"/>
    </source>
</evidence>
<proteinExistence type="inferred from homology"/>
<name>NDHJ_CRYJA</name>
<feature type="chain" id="PRO_0000358258" description="NAD(P)H-quinone oxidoreductase subunit J, chloroplastic">
    <location>
        <begin position="1"/>
        <end position="158"/>
    </location>
</feature>
<accession>B1VKF6</accession>
<geneLocation type="chloroplast"/>
<organism>
    <name type="scientific">Cryptomeria japonica</name>
    <name type="common">Japanese cedar</name>
    <name type="synonym">Cupressus japonica</name>
    <dbReference type="NCBI Taxonomy" id="3369"/>
    <lineage>
        <taxon>Eukaryota</taxon>
        <taxon>Viridiplantae</taxon>
        <taxon>Streptophyta</taxon>
        <taxon>Embryophyta</taxon>
        <taxon>Tracheophyta</taxon>
        <taxon>Spermatophyta</taxon>
        <taxon>Pinopsida</taxon>
        <taxon>Pinidae</taxon>
        <taxon>Conifers II</taxon>
        <taxon>Cupressales</taxon>
        <taxon>Cupressaceae</taxon>
        <taxon>Cryptomeria</taxon>
    </lineage>
</organism>
<keyword id="KW-0150">Chloroplast</keyword>
<keyword id="KW-0472">Membrane</keyword>
<keyword id="KW-0520">NAD</keyword>
<keyword id="KW-0521">NADP</keyword>
<keyword id="KW-0934">Plastid</keyword>
<keyword id="KW-0618">Plastoquinone</keyword>
<keyword id="KW-0874">Quinone</keyword>
<keyword id="KW-0793">Thylakoid</keyword>
<keyword id="KW-1278">Translocase</keyword>
<keyword id="KW-0813">Transport</keyword>
<sequence length="158" mass="18312">MQGRLSAWLAKHKLAHRPLGFDYQGTETLQIKAEDWVSIAVALYVYGFNYLRSQCAYDVAPGGSLASVYHLTKINDNADQPEEVCIKVFVPREDPRIPSVLRIWKGANFQERESYDMLGIFYESHPCLKRILMPESWIGWPLRKDYIAPDFYEIQDSH</sequence>
<protein>
    <recommendedName>
        <fullName evidence="1">NAD(P)H-quinone oxidoreductase subunit J, chloroplastic</fullName>
        <ecNumber evidence="1">7.1.1.-</ecNumber>
    </recommendedName>
    <alternativeName>
        <fullName>NAD(P)H dehydrogenase subunit J</fullName>
    </alternativeName>
    <alternativeName>
        <fullName evidence="1">NADH-plastoquinone oxidoreductase subunit J</fullName>
    </alternativeName>
</protein>
<comment type="function">
    <text evidence="1">NDH shuttles electrons from NAD(P)H:plastoquinone, via FMN and iron-sulfur (Fe-S) centers, to quinones in the photosynthetic chain and possibly in a chloroplast respiratory chain. The immediate electron acceptor for the enzyme in this species is believed to be plastoquinone. Couples the redox reaction to proton translocation, and thus conserves the redox energy in a proton gradient.</text>
</comment>
<comment type="catalytic activity">
    <reaction evidence="1">
        <text>a plastoquinone + NADH + (n+1) H(+)(in) = a plastoquinol + NAD(+) + n H(+)(out)</text>
        <dbReference type="Rhea" id="RHEA:42608"/>
        <dbReference type="Rhea" id="RHEA-COMP:9561"/>
        <dbReference type="Rhea" id="RHEA-COMP:9562"/>
        <dbReference type="ChEBI" id="CHEBI:15378"/>
        <dbReference type="ChEBI" id="CHEBI:17757"/>
        <dbReference type="ChEBI" id="CHEBI:57540"/>
        <dbReference type="ChEBI" id="CHEBI:57945"/>
        <dbReference type="ChEBI" id="CHEBI:62192"/>
    </reaction>
</comment>
<comment type="catalytic activity">
    <reaction evidence="1">
        <text>a plastoquinone + NADPH + (n+1) H(+)(in) = a plastoquinol + NADP(+) + n H(+)(out)</text>
        <dbReference type="Rhea" id="RHEA:42612"/>
        <dbReference type="Rhea" id="RHEA-COMP:9561"/>
        <dbReference type="Rhea" id="RHEA-COMP:9562"/>
        <dbReference type="ChEBI" id="CHEBI:15378"/>
        <dbReference type="ChEBI" id="CHEBI:17757"/>
        <dbReference type="ChEBI" id="CHEBI:57783"/>
        <dbReference type="ChEBI" id="CHEBI:58349"/>
        <dbReference type="ChEBI" id="CHEBI:62192"/>
    </reaction>
</comment>
<comment type="subunit">
    <text evidence="1">NDH is composed of at least 16 different subunits, 5 of which are encoded in the nucleus.</text>
</comment>
<comment type="subcellular location">
    <subcellularLocation>
        <location evidence="1">Plastid</location>
        <location evidence="1">Chloroplast thylakoid membrane</location>
        <topology evidence="1">Peripheral membrane protein</topology>
        <orientation evidence="1">Stromal side</orientation>
    </subcellularLocation>
</comment>
<comment type="similarity">
    <text evidence="1">Belongs to the complex I 30 kDa subunit family.</text>
</comment>
<dbReference type="EC" id="7.1.1.-" evidence="1"/>
<dbReference type="EMBL" id="AP009377">
    <property type="protein sequence ID" value="BAG16667.1"/>
    <property type="molecule type" value="Genomic_DNA"/>
</dbReference>
<dbReference type="RefSeq" id="YP_001806669.1">
    <property type="nucleotide sequence ID" value="NC_010548.1"/>
</dbReference>
<dbReference type="SMR" id="B1VKF6"/>
<dbReference type="GeneID" id="6166569"/>
<dbReference type="KEGG" id="cjf:6166569"/>
<dbReference type="OrthoDB" id="1909959at2759"/>
<dbReference type="GO" id="GO:0009535">
    <property type="term" value="C:chloroplast thylakoid membrane"/>
    <property type="evidence" value="ECO:0007669"/>
    <property type="project" value="UniProtKB-SubCell"/>
</dbReference>
<dbReference type="GO" id="GO:0008137">
    <property type="term" value="F:NADH dehydrogenase (ubiquinone) activity"/>
    <property type="evidence" value="ECO:0007669"/>
    <property type="project" value="InterPro"/>
</dbReference>
<dbReference type="GO" id="GO:0048038">
    <property type="term" value="F:quinone binding"/>
    <property type="evidence" value="ECO:0007669"/>
    <property type="project" value="UniProtKB-KW"/>
</dbReference>
<dbReference type="GO" id="GO:0019684">
    <property type="term" value="P:photosynthesis, light reaction"/>
    <property type="evidence" value="ECO:0007669"/>
    <property type="project" value="UniProtKB-UniRule"/>
</dbReference>
<dbReference type="Gene3D" id="3.30.460.80">
    <property type="entry name" value="NADH:ubiquinone oxidoreductase, 30kDa subunit"/>
    <property type="match status" value="1"/>
</dbReference>
<dbReference type="HAMAP" id="MF_01357">
    <property type="entry name" value="NDH1_NuoC"/>
    <property type="match status" value="1"/>
</dbReference>
<dbReference type="InterPro" id="IPR010218">
    <property type="entry name" value="NADH_DH_suC"/>
</dbReference>
<dbReference type="InterPro" id="IPR037232">
    <property type="entry name" value="NADH_quin_OxRdtase_su_C/D-like"/>
</dbReference>
<dbReference type="InterPro" id="IPR001268">
    <property type="entry name" value="NADH_UbQ_OxRdtase_30kDa_su"/>
</dbReference>
<dbReference type="InterPro" id="IPR020396">
    <property type="entry name" value="NADH_UbQ_OxRdtase_CS"/>
</dbReference>
<dbReference type="NCBIfam" id="NF009141">
    <property type="entry name" value="PRK12494.1"/>
    <property type="match status" value="1"/>
</dbReference>
<dbReference type="PANTHER" id="PTHR10884:SF14">
    <property type="entry name" value="NADH DEHYDROGENASE [UBIQUINONE] IRON-SULFUR PROTEIN 3, MITOCHONDRIAL"/>
    <property type="match status" value="1"/>
</dbReference>
<dbReference type="PANTHER" id="PTHR10884">
    <property type="entry name" value="NADH DEHYDROGENASE UBIQUINONE IRON-SULFUR PROTEIN 3"/>
    <property type="match status" value="1"/>
</dbReference>
<dbReference type="Pfam" id="PF00329">
    <property type="entry name" value="Complex1_30kDa"/>
    <property type="match status" value="1"/>
</dbReference>
<dbReference type="SUPFAM" id="SSF143243">
    <property type="entry name" value="Nqo5-like"/>
    <property type="match status" value="1"/>
</dbReference>
<dbReference type="PROSITE" id="PS00542">
    <property type="entry name" value="COMPLEX1_30K"/>
    <property type="match status" value="1"/>
</dbReference>